<sequence length="117" mass="12325">MSAGSSCSQTPSRAIPTRRVALGDGVQLPPGDYSTTPGGTLFSTTPGGTRIIYDRKFLMECRNSPVAKTPPKDLPAIPGVTSPTSDEPPMQASQSQLPSSPEDKRAGGEESQFEMDI</sequence>
<keyword id="KW-0007">Acetylation</keyword>
<keyword id="KW-0963">Cytoplasm</keyword>
<keyword id="KW-1017">Isopeptide bond</keyword>
<keyword id="KW-0539">Nucleus</keyword>
<keyword id="KW-0597">Phosphoprotein</keyword>
<keyword id="KW-0652">Protein synthesis inhibitor</keyword>
<keyword id="KW-1185">Reference proteome</keyword>
<keyword id="KW-0810">Translation regulation</keyword>
<keyword id="KW-0832">Ubl conjugation</keyword>
<comment type="function">
    <text evidence="2 10">Repressor of translation initiation that regulates EIF4E activity by preventing its assembly into the eIF4F complex: hypophosphorylated form competes with EIF4G1/EIF4G3 and strongly binds to EIF4E, leading to repress translation. In contrast, hyperphosphorylated form dissociates from EIF4E, allowing interaction between EIF4G1/EIF4G3 and EIF4E, leading to initiation of translation (By similarity). Mediates the regulation of protein translation by hormones, growth factors and other stimuli that signal through the MAP kinase and mTORC1 pathways (PubMed:7629182).</text>
</comment>
<comment type="subunit">
    <text evidence="8 10">Hypophosphorylated EIF4EBP1 competes with EIF4G1/EIF4G3 to interact with EIF4E; insulin stimulated MAP-kinase (MAPK1 and MAPK3) or mTORC1 phosphorylation of EIF4EBP1 causes dissociation of the complex allowing EIF4G1/EIF4G3 to bind and consequent initiation of translation (PubMed:7629182). Interacts (via TOS motif) with RPTOR; promoting phosphorylation by mTORC1 (PubMed:24139800).</text>
</comment>
<comment type="interaction">
    <interactant intactId="EBI-398674">
        <id>Q60876</id>
    </interactant>
    <interactant intactId="EBI-2000006">
        <id>P63073</id>
        <label>Eif4e</label>
    </interactant>
    <organismsDiffer>false</organismsDiffer>
    <experiments>3</experiments>
</comment>
<comment type="subcellular location">
    <subcellularLocation>
        <location evidence="6">Cytoplasm</location>
    </subcellularLocation>
    <subcellularLocation>
        <location evidence="6">Nucleus</location>
    </subcellularLocation>
    <text evidence="6">Localization to the nucleus is unaffected by phosphorylation status.</text>
</comment>
<comment type="tissue specificity">
    <text evidence="10">Highest expression in fat cells.</text>
</comment>
<comment type="domain">
    <text evidence="8">The TOS motif mediates interaction with RPTOR, leading to promote phosphorylation by mTORC1 complex.</text>
</comment>
<comment type="PTM">
    <text evidence="6 10">Phosphorylated on serine and threonine residues in response to insulin, EGF and PDGF. Phosphorylation at Thr-36, Thr-45, Ser-64 and Thr-69, corresponding to the hyperphosphorylated form, is regulated by mTORC1 and abolishes binding to EIF4E.</text>
</comment>
<comment type="PTM">
    <text evidence="2">Ubiquitinated: when eIF4E levels are low, hypophosphorylated form is ubiquitinated by the BCR(KLHL25) complex, leading to its degradation and serving as a homeostatic mechanism to maintain translation and prevent eIF4E inhibition when eIF4E levels are low. Not ubiquitinated when hyperphosphorylated (at Thr-36, Thr-45, Ser-64 and Thr-69) or associated with eIF4E.</text>
</comment>
<comment type="disruption phenotype">
    <text evidence="5 7">Mice lacking both Eif4ebp1 and Eif4ebp2 display increased their sensitivity to diet-induced obesity (PubMed:17273556). Mice lacking both Eif4ebp1 and Eif4ebp2 show defects in myelopoiesis: mice display an increased number of immature granulocytic precursors, associated with a decreased number of mature granulocytic elements (PubMed:19175792).</text>
</comment>
<comment type="similarity">
    <text evidence="11">Belongs to the eIF4E-binding protein family.</text>
</comment>
<feature type="initiator methionine" description="Removed" evidence="2">
    <location>
        <position position="1"/>
    </location>
</feature>
<feature type="chain" id="PRO_0000190514" description="Eukaryotic translation initiation factor 4E-binding protein 1">
    <location>
        <begin position="2"/>
        <end position="117"/>
    </location>
</feature>
<feature type="region of interest" description="Disordered" evidence="3">
    <location>
        <begin position="1"/>
        <end position="47"/>
    </location>
</feature>
<feature type="region of interest" description="Disordered" evidence="3">
    <location>
        <begin position="64"/>
        <end position="117"/>
    </location>
</feature>
<feature type="short sequence motif" description="YXXXXLphi motif" evidence="1">
    <location>
        <begin position="53"/>
        <end position="59"/>
    </location>
</feature>
<feature type="short sequence motif" description="TOS motif" evidence="8">
    <location>
        <begin position="113"/>
        <end position="117"/>
    </location>
</feature>
<feature type="compositionally biased region" description="Polar residues" evidence="3">
    <location>
        <begin position="1"/>
        <end position="12"/>
    </location>
</feature>
<feature type="compositionally biased region" description="Polar residues" evidence="3">
    <location>
        <begin position="33"/>
        <end position="47"/>
    </location>
</feature>
<feature type="compositionally biased region" description="Polar residues" evidence="3">
    <location>
        <begin position="81"/>
        <end position="99"/>
    </location>
</feature>
<feature type="modified residue" description="N-acetylserine" evidence="2">
    <location>
        <position position="2"/>
    </location>
</feature>
<feature type="modified residue" description="Phosphothreonine" evidence="9 13">
    <location>
        <position position="36"/>
    </location>
</feature>
<feature type="modified residue" description="Phosphothreonine" evidence="13">
    <location>
        <position position="40"/>
    </location>
</feature>
<feature type="modified residue" description="Phosphoserine" evidence="13">
    <location>
        <position position="43"/>
    </location>
</feature>
<feature type="modified residue" description="Phosphothreonine" evidence="9 13">
    <location>
        <position position="45"/>
    </location>
</feature>
<feature type="modified residue" description="Phosphothreonine" evidence="2">
    <location>
        <position position="49"/>
    </location>
</feature>
<feature type="modified residue" description="Phosphotyrosine" evidence="2">
    <location>
        <position position="53"/>
    </location>
</feature>
<feature type="modified residue" description="Phosphoserine" evidence="13">
    <location>
        <position position="64"/>
    </location>
</feature>
<feature type="modified residue" description="Phosphothreonine" evidence="13">
    <location>
        <position position="69"/>
    </location>
</feature>
<feature type="modified residue" description="Phosphoserine" evidence="2">
    <location>
        <position position="82"/>
    </location>
</feature>
<feature type="modified residue" description="Phosphoserine" evidence="13">
    <location>
        <position position="95"/>
    </location>
</feature>
<feature type="modified residue" description="Phosphoserine" evidence="13">
    <location>
        <position position="99"/>
    </location>
</feature>
<feature type="modified residue" description="Phosphoserine" evidence="13">
    <location>
        <position position="100"/>
    </location>
</feature>
<feature type="modified residue" description="Phosphoserine" evidence="2">
    <location>
        <position position="111"/>
    </location>
</feature>
<feature type="cross-link" description="Glycyl lysine isopeptide (Lys-Gly) (interchain with G-Cter in ubiquitin)" evidence="2">
    <location>
        <position position="56"/>
    </location>
</feature>
<feature type="mutagenesis site" description="Impaired interaction with RPTOR." evidence="8">
    <original>F</original>
    <variation>A</variation>
    <location>
        <position position="113"/>
    </location>
</feature>
<feature type="sequence conflict" description="In Ref. 2; BAB28612." evidence="11" ref="2">
    <original>S</original>
    <variation>N</variation>
    <location>
        <position position="93"/>
    </location>
</feature>
<reference key="1">
    <citation type="journal article" date="1995" name="J. Biol. Chem.">
        <title>Control of PHAS-I by insulin in 3T3-L1 adipocytes. Synthesis, degradation, and phosphorylation by a rapamycin-sensitive and mitogen-activated protein kinase-independent pathway.</title>
        <authorList>
            <person name="Lin T.-A."/>
            <person name="Kong X."/>
            <person name="Saltiel A.R."/>
            <person name="Blackshear P.J."/>
            <person name="Lawrence J.C. Jr."/>
        </authorList>
    </citation>
    <scope>NUCLEOTIDE SEQUENCE [MRNA]</scope>
    <scope>FUNCTION</scope>
    <scope>TISSUE SPECIFICITY</scope>
    <scope>PHOSPHORYLATION</scope>
    <scope>INTERACTION WITH EIF4E</scope>
</reference>
<reference key="2">
    <citation type="journal article" date="2005" name="Science">
        <title>The transcriptional landscape of the mammalian genome.</title>
        <authorList>
            <person name="Carninci P."/>
            <person name="Kasukawa T."/>
            <person name="Katayama S."/>
            <person name="Gough J."/>
            <person name="Frith M.C."/>
            <person name="Maeda N."/>
            <person name="Oyama R."/>
            <person name="Ravasi T."/>
            <person name="Lenhard B."/>
            <person name="Wells C."/>
            <person name="Kodzius R."/>
            <person name="Shimokawa K."/>
            <person name="Bajic V.B."/>
            <person name="Brenner S.E."/>
            <person name="Batalov S."/>
            <person name="Forrest A.R."/>
            <person name="Zavolan M."/>
            <person name="Davis M.J."/>
            <person name="Wilming L.G."/>
            <person name="Aidinis V."/>
            <person name="Allen J.E."/>
            <person name="Ambesi-Impiombato A."/>
            <person name="Apweiler R."/>
            <person name="Aturaliya R.N."/>
            <person name="Bailey T.L."/>
            <person name="Bansal M."/>
            <person name="Baxter L."/>
            <person name="Beisel K.W."/>
            <person name="Bersano T."/>
            <person name="Bono H."/>
            <person name="Chalk A.M."/>
            <person name="Chiu K.P."/>
            <person name="Choudhary V."/>
            <person name="Christoffels A."/>
            <person name="Clutterbuck D.R."/>
            <person name="Crowe M.L."/>
            <person name="Dalla E."/>
            <person name="Dalrymple B.P."/>
            <person name="de Bono B."/>
            <person name="Della Gatta G."/>
            <person name="di Bernardo D."/>
            <person name="Down T."/>
            <person name="Engstrom P."/>
            <person name="Fagiolini M."/>
            <person name="Faulkner G."/>
            <person name="Fletcher C.F."/>
            <person name="Fukushima T."/>
            <person name="Furuno M."/>
            <person name="Futaki S."/>
            <person name="Gariboldi M."/>
            <person name="Georgii-Hemming P."/>
            <person name="Gingeras T.R."/>
            <person name="Gojobori T."/>
            <person name="Green R.E."/>
            <person name="Gustincich S."/>
            <person name="Harbers M."/>
            <person name="Hayashi Y."/>
            <person name="Hensch T.K."/>
            <person name="Hirokawa N."/>
            <person name="Hill D."/>
            <person name="Huminiecki L."/>
            <person name="Iacono M."/>
            <person name="Ikeo K."/>
            <person name="Iwama A."/>
            <person name="Ishikawa T."/>
            <person name="Jakt M."/>
            <person name="Kanapin A."/>
            <person name="Katoh M."/>
            <person name="Kawasawa Y."/>
            <person name="Kelso J."/>
            <person name="Kitamura H."/>
            <person name="Kitano H."/>
            <person name="Kollias G."/>
            <person name="Krishnan S.P."/>
            <person name="Kruger A."/>
            <person name="Kummerfeld S.K."/>
            <person name="Kurochkin I.V."/>
            <person name="Lareau L.F."/>
            <person name="Lazarevic D."/>
            <person name="Lipovich L."/>
            <person name="Liu J."/>
            <person name="Liuni S."/>
            <person name="McWilliam S."/>
            <person name="Madan Babu M."/>
            <person name="Madera M."/>
            <person name="Marchionni L."/>
            <person name="Matsuda H."/>
            <person name="Matsuzawa S."/>
            <person name="Miki H."/>
            <person name="Mignone F."/>
            <person name="Miyake S."/>
            <person name="Morris K."/>
            <person name="Mottagui-Tabar S."/>
            <person name="Mulder N."/>
            <person name="Nakano N."/>
            <person name="Nakauchi H."/>
            <person name="Ng P."/>
            <person name="Nilsson R."/>
            <person name="Nishiguchi S."/>
            <person name="Nishikawa S."/>
            <person name="Nori F."/>
            <person name="Ohara O."/>
            <person name="Okazaki Y."/>
            <person name="Orlando V."/>
            <person name="Pang K.C."/>
            <person name="Pavan W.J."/>
            <person name="Pavesi G."/>
            <person name="Pesole G."/>
            <person name="Petrovsky N."/>
            <person name="Piazza S."/>
            <person name="Reed J."/>
            <person name="Reid J.F."/>
            <person name="Ring B.Z."/>
            <person name="Ringwald M."/>
            <person name="Rost B."/>
            <person name="Ruan Y."/>
            <person name="Salzberg S.L."/>
            <person name="Sandelin A."/>
            <person name="Schneider C."/>
            <person name="Schoenbach C."/>
            <person name="Sekiguchi K."/>
            <person name="Semple C.A."/>
            <person name="Seno S."/>
            <person name="Sessa L."/>
            <person name="Sheng Y."/>
            <person name="Shibata Y."/>
            <person name="Shimada H."/>
            <person name="Shimada K."/>
            <person name="Silva D."/>
            <person name="Sinclair B."/>
            <person name="Sperling S."/>
            <person name="Stupka E."/>
            <person name="Sugiura K."/>
            <person name="Sultana R."/>
            <person name="Takenaka Y."/>
            <person name="Taki K."/>
            <person name="Tammoja K."/>
            <person name="Tan S.L."/>
            <person name="Tang S."/>
            <person name="Taylor M.S."/>
            <person name="Tegner J."/>
            <person name="Teichmann S.A."/>
            <person name="Ueda H.R."/>
            <person name="van Nimwegen E."/>
            <person name="Verardo R."/>
            <person name="Wei C.L."/>
            <person name="Yagi K."/>
            <person name="Yamanishi H."/>
            <person name="Zabarovsky E."/>
            <person name="Zhu S."/>
            <person name="Zimmer A."/>
            <person name="Hide W."/>
            <person name="Bult C."/>
            <person name="Grimmond S.M."/>
            <person name="Teasdale R.D."/>
            <person name="Liu E.T."/>
            <person name="Brusic V."/>
            <person name="Quackenbush J."/>
            <person name="Wahlestedt C."/>
            <person name="Mattick J.S."/>
            <person name="Hume D.A."/>
            <person name="Kai C."/>
            <person name="Sasaki D."/>
            <person name="Tomaru Y."/>
            <person name="Fukuda S."/>
            <person name="Kanamori-Katayama M."/>
            <person name="Suzuki M."/>
            <person name="Aoki J."/>
            <person name="Arakawa T."/>
            <person name="Iida J."/>
            <person name="Imamura K."/>
            <person name="Itoh M."/>
            <person name="Kato T."/>
            <person name="Kawaji H."/>
            <person name="Kawagashira N."/>
            <person name="Kawashima T."/>
            <person name="Kojima M."/>
            <person name="Kondo S."/>
            <person name="Konno H."/>
            <person name="Nakano K."/>
            <person name="Ninomiya N."/>
            <person name="Nishio T."/>
            <person name="Okada M."/>
            <person name="Plessy C."/>
            <person name="Shibata K."/>
            <person name="Shiraki T."/>
            <person name="Suzuki S."/>
            <person name="Tagami M."/>
            <person name="Waki K."/>
            <person name="Watahiki A."/>
            <person name="Okamura-Oho Y."/>
            <person name="Suzuki H."/>
            <person name="Kawai J."/>
            <person name="Hayashizaki Y."/>
        </authorList>
    </citation>
    <scope>NUCLEOTIDE SEQUENCE [LARGE SCALE MRNA]</scope>
    <source>
        <strain>C57BL/6J</strain>
        <strain>NOD</strain>
        <tissue>Embryo</tissue>
    </source>
</reference>
<reference key="3">
    <citation type="journal article" date="2004" name="Genome Res.">
        <title>The status, quality, and expansion of the NIH full-length cDNA project: the Mammalian Gene Collection (MGC).</title>
        <authorList>
            <consortium name="The MGC Project Team"/>
        </authorList>
    </citation>
    <scope>NUCLEOTIDE SEQUENCE [LARGE SCALE MRNA]</scope>
    <source>
        <strain evidence="4">C57BL/6J</strain>
        <tissue evidence="4">Mammary gland</tissue>
    </source>
</reference>
<reference key="4">
    <citation type="journal article" date="2007" name="J. Clin. Invest.">
        <title>Elevated sensitivity to diet-induced obesity and insulin resistance in mice lacking 4E-BP1 and 4E-BP2.</title>
        <authorList>
            <person name="Le Bacquer O."/>
            <person name="Petroulakis E."/>
            <person name="Paglialunga S."/>
            <person name="Poulin F."/>
            <person name="Richard D."/>
            <person name="Cianflone K."/>
            <person name="Sonenberg N."/>
        </authorList>
    </citation>
    <scope>DISRUPTION PHENOTYPE</scope>
</reference>
<reference key="5">
    <citation type="journal article" date="2008" name="RNA">
        <title>Control of eIF4E cellular localization by eIF4E-binding proteins, 4E-BPs.</title>
        <authorList>
            <person name="Rong L."/>
            <person name="Livingstone M."/>
            <person name="Sukarieh R."/>
            <person name="Petroulakis E."/>
            <person name="Gingras A.C."/>
            <person name="Crosby K."/>
            <person name="Smith B."/>
            <person name="Polakiewicz R.D."/>
            <person name="Pelletier J."/>
            <person name="Ferraiuolo M.A."/>
            <person name="Sonenberg N."/>
        </authorList>
    </citation>
    <scope>SUBCELLULAR LOCATION</scope>
    <scope>PHOSPHORYLATION</scope>
</reference>
<reference key="6">
    <citation type="journal article" date="2009" name="Immunology">
        <title>Impaired myelopoiesis in mice lacking the repressors of translation initiation, 4E-BP1 and 4E-BP2.</title>
        <authorList>
            <person name="Olson K.E."/>
            <person name="Booth G.C."/>
            <person name="Poulin F."/>
            <person name="Sonenberg N."/>
            <person name="Beretta L."/>
        </authorList>
    </citation>
    <scope>DISRUPTION PHENOTYPE</scope>
</reference>
<reference key="7">
    <citation type="journal article" date="2009" name="Mol. Cell. Proteomics">
        <title>Large scale localization of protein phosphorylation by use of electron capture dissociation mass spectrometry.</title>
        <authorList>
            <person name="Sweet S.M."/>
            <person name="Bailey C.M."/>
            <person name="Cunningham D.L."/>
            <person name="Heath J.K."/>
            <person name="Cooper H.J."/>
        </authorList>
    </citation>
    <scope>IDENTIFICATION BY MASS SPECTROMETRY [LARGE SCALE ANALYSIS]</scope>
    <source>
        <tissue>Embryonic fibroblast</tissue>
    </source>
</reference>
<reference key="8">
    <citation type="journal article" date="2010" name="Cell">
        <title>A tissue-specific atlas of mouse protein phosphorylation and expression.</title>
        <authorList>
            <person name="Huttlin E.L."/>
            <person name="Jedrychowski M.P."/>
            <person name="Elias J.E."/>
            <person name="Goswami T."/>
            <person name="Rad R."/>
            <person name="Beausoleil S.A."/>
            <person name="Villen J."/>
            <person name="Haas W."/>
            <person name="Sowa M.E."/>
            <person name="Gygi S.P."/>
        </authorList>
    </citation>
    <scope>PHOSPHORYLATION [LARGE SCALE ANALYSIS] AT THR-36; THR-40; SER-43; THR-45; SER-64; THR-69; SER-95; SER-99 AND SER-100</scope>
    <scope>IDENTIFICATION BY MASS SPECTROMETRY [LARGE SCALE ANALYSIS]</scope>
    <source>
        <tissue>Brain</tissue>
        <tissue>Brown adipose tissue</tissue>
        <tissue>Heart</tissue>
        <tissue>Kidney</tissue>
        <tissue>Liver</tissue>
        <tissue>Lung</tissue>
        <tissue>Pancreas</tissue>
        <tissue>Spleen</tissue>
        <tissue>Testis</tissue>
    </source>
</reference>
<reference key="9">
    <citation type="journal article" date="2013" name="Cell Rep.">
        <title>mTORC1 targets the translational repressor 4E-BP2, but not S6 kinase 1/2, to regulate neural stem cell self-renewal in vivo.</title>
        <authorList>
            <person name="Hartman N.W."/>
            <person name="Lin T.V."/>
            <person name="Zhang L."/>
            <person name="Paquelet G.E."/>
            <person name="Feliciano D.M."/>
            <person name="Bordey A."/>
        </authorList>
    </citation>
    <scope>INTERACTION WITH RPTOR</scope>
    <scope>MUTAGENESIS OF PHE-113</scope>
</reference>
<reference key="10">
    <citation type="journal article" date="2015" name="J. Biol. Chem.">
        <title>Deletion of MLIP (muscle-enriched A-type lamin-interacting protein) leads to cardiac hyperactivation of Akt/mammalian target of rapamycin (mTOR) and impaired cardiac adaptation.</title>
        <authorList>
            <person name="Cattin M.E."/>
            <person name="Wang J."/>
            <person name="Weldrick J.J."/>
            <person name="Roeske C.L."/>
            <person name="Mak E."/>
            <person name="Thorn S.L."/>
            <person name="DaSilva J.N."/>
            <person name="Wang Y."/>
            <person name="Lusis A.J."/>
            <person name="Burgon P.G."/>
        </authorList>
    </citation>
    <scope>PHOSPHORYLATION AT THR-36 AND THR-45</scope>
</reference>
<gene>
    <name type="primary">Eif4ebp1</name>
</gene>
<proteinExistence type="evidence at protein level"/>
<name>4EBP1_MOUSE</name>
<dbReference type="EMBL" id="U28656">
    <property type="protein sequence ID" value="AAA88818.1"/>
    <property type="molecule type" value="mRNA"/>
</dbReference>
<dbReference type="EMBL" id="AK013033">
    <property type="protein sequence ID" value="BAB28612.1"/>
    <property type="molecule type" value="mRNA"/>
</dbReference>
<dbReference type="EMBL" id="AK169979">
    <property type="protein sequence ID" value="BAE41494.1"/>
    <property type="molecule type" value="mRNA"/>
</dbReference>
<dbReference type="EMBL" id="AK170031">
    <property type="protein sequence ID" value="BAE41521.1"/>
    <property type="molecule type" value="mRNA"/>
</dbReference>
<dbReference type="EMBL" id="BC002045">
    <property type="protein sequence ID" value="AAH02045.1"/>
    <property type="molecule type" value="mRNA"/>
</dbReference>
<dbReference type="CCDS" id="CCDS22214.1"/>
<dbReference type="PIR" id="A57396">
    <property type="entry name" value="A57396"/>
</dbReference>
<dbReference type="RefSeq" id="NP_031944.3">
    <property type="nucleotide sequence ID" value="NM_007918.3"/>
</dbReference>
<dbReference type="SMR" id="Q60876"/>
<dbReference type="BioGRID" id="199421">
    <property type="interactions" value="11"/>
</dbReference>
<dbReference type="DIP" id="DIP-32577N"/>
<dbReference type="FunCoup" id="Q60876">
    <property type="interactions" value="757"/>
</dbReference>
<dbReference type="IntAct" id="Q60876">
    <property type="interactions" value="4"/>
</dbReference>
<dbReference type="MINT" id="Q60876"/>
<dbReference type="STRING" id="10090.ENSMUSP00000033880"/>
<dbReference type="GlyGen" id="Q60876">
    <property type="glycosylation" value="3 sites, 1 O-linked glycan (3 sites)"/>
</dbReference>
<dbReference type="iPTMnet" id="Q60876"/>
<dbReference type="PhosphoSitePlus" id="Q60876"/>
<dbReference type="jPOST" id="Q60876"/>
<dbReference type="PaxDb" id="10090-ENSMUSP00000033880"/>
<dbReference type="PeptideAtlas" id="Q60876"/>
<dbReference type="ProteomicsDB" id="285687"/>
<dbReference type="Pumba" id="Q60876"/>
<dbReference type="Antibodypedia" id="3558">
    <property type="antibodies" value="2026 antibodies from 47 providers"/>
</dbReference>
<dbReference type="DNASU" id="13685"/>
<dbReference type="Ensembl" id="ENSMUST00000033880.7">
    <property type="protein sequence ID" value="ENSMUSP00000033880.6"/>
    <property type="gene ID" value="ENSMUSG00000031490.7"/>
</dbReference>
<dbReference type="GeneID" id="13685"/>
<dbReference type="KEGG" id="mmu:13685"/>
<dbReference type="UCSC" id="uc009lih.1">
    <property type="organism name" value="mouse"/>
</dbReference>
<dbReference type="AGR" id="MGI:103267"/>
<dbReference type="CTD" id="1978"/>
<dbReference type="MGI" id="MGI:103267">
    <property type="gene designation" value="Eif4ebp1"/>
</dbReference>
<dbReference type="VEuPathDB" id="HostDB:ENSMUSG00000031490"/>
<dbReference type="eggNOG" id="ENOG502S4SY">
    <property type="taxonomic scope" value="Eukaryota"/>
</dbReference>
<dbReference type="GeneTree" id="ENSGT00940000159932"/>
<dbReference type="HOGENOM" id="CLU_111706_0_0_1"/>
<dbReference type="InParanoid" id="Q60876"/>
<dbReference type="OMA" id="DEHPQFE"/>
<dbReference type="OrthoDB" id="19729at2759"/>
<dbReference type="PhylomeDB" id="Q60876"/>
<dbReference type="TreeFam" id="TF101530"/>
<dbReference type="Reactome" id="R-MMU-166208">
    <property type="pathway name" value="mTORC1-mediated signalling"/>
</dbReference>
<dbReference type="Reactome" id="R-MMU-72662">
    <property type="pathway name" value="Activation of the mRNA upon binding of the cap-binding complex and eIFs, and subsequent binding to 43S"/>
</dbReference>
<dbReference type="BioGRID-ORCS" id="13685">
    <property type="hits" value="1 hit in 77 CRISPR screens"/>
</dbReference>
<dbReference type="ChiTaRS" id="Eif4ebp1">
    <property type="organism name" value="mouse"/>
</dbReference>
<dbReference type="PRO" id="PR:Q60876"/>
<dbReference type="Proteomes" id="UP000000589">
    <property type="component" value="Chromosome 8"/>
</dbReference>
<dbReference type="RNAct" id="Q60876">
    <property type="molecule type" value="protein"/>
</dbReference>
<dbReference type="Bgee" id="ENSMUSG00000031490">
    <property type="expression patterns" value="Expressed in parotid gland and 219 other cell types or tissues"/>
</dbReference>
<dbReference type="GO" id="GO:0005737">
    <property type="term" value="C:cytoplasm"/>
    <property type="evidence" value="ECO:0000305"/>
    <property type="project" value="MGI"/>
</dbReference>
<dbReference type="GO" id="GO:0005829">
    <property type="term" value="C:cytosol"/>
    <property type="evidence" value="ECO:0000250"/>
    <property type="project" value="AgBase"/>
</dbReference>
<dbReference type="GO" id="GO:0005634">
    <property type="term" value="C:nucleus"/>
    <property type="evidence" value="ECO:0007669"/>
    <property type="project" value="UniProtKB-SubCell"/>
</dbReference>
<dbReference type="GO" id="GO:0008190">
    <property type="term" value="F:eukaryotic initiation factor 4E binding"/>
    <property type="evidence" value="ECO:0000353"/>
    <property type="project" value="MGI"/>
</dbReference>
<dbReference type="GO" id="GO:0030371">
    <property type="term" value="F:translation repressor activity"/>
    <property type="evidence" value="ECO:0000250"/>
    <property type="project" value="UniProtKB"/>
</dbReference>
<dbReference type="GO" id="GO:0071549">
    <property type="term" value="P:cellular response to dexamethasone stimulus"/>
    <property type="evidence" value="ECO:0000314"/>
    <property type="project" value="MGI"/>
</dbReference>
<dbReference type="GO" id="GO:0008286">
    <property type="term" value="P:insulin receptor signaling pathway"/>
    <property type="evidence" value="ECO:0000314"/>
    <property type="project" value="MGI"/>
</dbReference>
<dbReference type="GO" id="GO:0002192">
    <property type="term" value="P:IRES-dependent translational initiation of linear mRNA"/>
    <property type="evidence" value="ECO:0000314"/>
    <property type="project" value="ParkinsonsUK-UCL"/>
</dbReference>
<dbReference type="GO" id="GO:0045947">
    <property type="term" value="P:negative regulation of translational initiation"/>
    <property type="evidence" value="ECO:0000314"/>
    <property type="project" value="MGI"/>
</dbReference>
<dbReference type="GO" id="GO:0006446">
    <property type="term" value="P:regulation of translational initiation"/>
    <property type="evidence" value="ECO:0000304"/>
    <property type="project" value="MGI"/>
</dbReference>
<dbReference type="GO" id="GO:0031929">
    <property type="term" value="P:TOR signaling"/>
    <property type="evidence" value="ECO:0000250"/>
    <property type="project" value="UniProtKB"/>
</dbReference>
<dbReference type="InterPro" id="IPR008606">
    <property type="entry name" value="EIF4EBP"/>
</dbReference>
<dbReference type="PANTHER" id="PTHR12669">
    <property type="entry name" value="EUKARYOTIC TRANSLATION INITIATION FACTOR 4E-BINDING PROTEIN"/>
    <property type="match status" value="1"/>
</dbReference>
<dbReference type="PANTHER" id="PTHR12669:SF14">
    <property type="entry name" value="EUKARYOTIC TRANSLATION INITIATION FACTOR 4E-BINDING PROTEIN 1"/>
    <property type="match status" value="1"/>
</dbReference>
<dbReference type="Pfam" id="PF05456">
    <property type="entry name" value="eIF_4EBP"/>
    <property type="match status" value="1"/>
</dbReference>
<evidence type="ECO:0000250" key="1">
    <source>
        <dbReference type="UniProtKB" id="P70445"/>
    </source>
</evidence>
<evidence type="ECO:0000250" key="2">
    <source>
        <dbReference type="UniProtKB" id="Q13541"/>
    </source>
</evidence>
<evidence type="ECO:0000256" key="3">
    <source>
        <dbReference type="SAM" id="MobiDB-lite"/>
    </source>
</evidence>
<evidence type="ECO:0000269" key="4">
    <source>
    </source>
</evidence>
<evidence type="ECO:0000269" key="5">
    <source>
    </source>
</evidence>
<evidence type="ECO:0000269" key="6">
    <source>
    </source>
</evidence>
<evidence type="ECO:0000269" key="7">
    <source>
    </source>
</evidence>
<evidence type="ECO:0000269" key="8">
    <source>
    </source>
</evidence>
<evidence type="ECO:0000269" key="9">
    <source>
    </source>
</evidence>
<evidence type="ECO:0000269" key="10">
    <source>
    </source>
</evidence>
<evidence type="ECO:0000305" key="11"/>
<evidence type="ECO:0000312" key="12">
    <source>
        <dbReference type="EMBL" id="AAH02045.1"/>
    </source>
</evidence>
<evidence type="ECO:0007744" key="13">
    <source>
    </source>
</evidence>
<accession>Q60876</accession>
<accession>Q3TDS8</accession>
<accession>Q9CZ40</accession>
<organism evidence="12">
    <name type="scientific">Mus musculus</name>
    <name type="common">Mouse</name>
    <dbReference type="NCBI Taxonomy" id="10090"/>
    <lineage>
        <taxon>Eukaryota</taxon>
        <taxon>Metazoa</taxon>
        <taxon>Chordata</taxon>
        <taxon>Craniata</taxon>
        <taxon>Vertebrata</taxon>
        <taxon>Euteleostomi</taxon>
        <taxon>Mammalia</taxon>
        <taxon>Eutheria</taxon>
        <taxon>Euarchontoglires</taxon>
        <taxon>Glires</taxon>
        <taxon>Rodentia</taxon>
        <taxon>Myomorpha</taxon>
        <taxon>Muroidea</taxon>
        <taxon>Muridae</taxon>
        <taxon>Murinae</taxon>
        <taxon>Mus</taxon>
        <taxon>Mus</taxon>
    </lineage>
</organism>
<protein>
    <recommendedName>
        <fullName>Eukaryotic translation initiation factor 4E-binding protein 1</fullName>
        <shortName>4E-BP1</shortName>
        <shortName>eIF4E-binding protein 1</shortName>
    </recommendedName>
    <alternativeName>
        <fullName>Phosphorylated heat- and acid-stable protein regulated by insulin 1</fullName>
        <shortName>PHAS-I</shortName>
    </alternativeName>
</protein>